<gene>
    <name evidence="1" type="primary">efp</name>
    <name type="ordered locus">Caur_2889</name>
</gene>
<accession>A9WFA4</accession>
<evidence type="ECO:0000255" key="1">
    <source>
        <dbReference type="HAMAP-Rule" id="MF_00141"/>
    </source>
</evidence>
<sequence length="189" mass="21205">MAAGTTSDLRNGIVIRYNNDLYQVVEFQHVAPGNWRAFVRMKLKSLTTGKVIEDRVRAGAEIDIVRIERRPMQYLYREGDSFIFMDNDTFDQIPVSADLVGDAVRFMKENETVDLVYDAEKDTIIGVELPIFVNLKVVETTVAVRGDTATNVTKPATLETGAVIEVPAFINEGDVLKIDTRTGEYITRV</sequence>
<dbReference type="EMBL" id="CP000909">
    <property type="protein sequence ID" value="ABY36088.1"/>
    <property type="molecule type" value="Genomic_DNA"/>
</dbReference>
<dbReference type="RefSeq" id="WP_012258741.1">
    <property type="nucleotide sequence ID" value="NC_010175.1"/>
</dbReference>
<dbReference type="RefSeq" id="YP_001636477.1">
    <property type="nucleotide sequence ID" value="NC_010175.1"/>
</dbReference>
<dbReference type="SMR" id="A9WFA4"/>
<dbReference type="FunCoup" id="A9WFA4">
    <property type="interactions" value="459"/>
</dbReference>
<dbReference type="STRING" id="324602.Caur_2889"/>
<dbReference type="EnsemblBacteria" id="ABY36088">
    <property type="protein sequence ID" value="ABY36088"/>
    <property type="gene ID" value="Caur_2889"/>
</dbReference>
<dbReference type="KEGG" id="cau:Caur_2889"/>
<dbReference type="PATRIC" id="fig|324602.8.peg.3253"/>
<dbReference type="eggNOG" id="COG0231">
    <property type="taxonomic scope" value="Bacteria"/>
</dbReference>
<dbReference type="HOGENOM" id="CLU_074944_0_1_0"/>
<dbReference type="InParanoid" id="A9WFA4"/>
<dbReference type="UniPathway" id="UPA00345"/>
<dbReference type="Proteomes" id="UP000002008">
    <property type="component" value="Chromosome"/>
</dbReference>
<dbReference type="GO" id="GO:0005737">
    <property type="term" value="C:cytoplasm"/>
    <property type="evidence" value="ECO:0000318"/>
    <property type="project" value="GO_Central"/>
</dbReference>
<dbReference type="GO" id="GO:0003746">
    <property type="term" value="F:translation elongation factor activity"/>
    <property type="evidence" value="ECO:0000318"/>
    <property type="project" value="GO_Central"/>
</dbReference>
<dbReference type="GO" id="GO:0043043">
    <property type="term" value="P:peptide biosynthetic process"/>
    <property type="evidence" value="ECO:0007669"/>
    <property type="project" value="InterPro"/>
</dbReference>
<dbReference type="CDD" id="cd04470">
    <property type="entry name" value="S1_EF-P_repeat_1"/>
    <property type="match status" value="1"/>
</dbReference>
<dbReference type="CDD" id="cd05794">
    <property type="entry name" value="S1_EF-P_repeat_2"/>
    <property type="match status" value="1"/>
</dbReference>
<dbReference type="FunFam" id="2.30.30.30:FF:000003">
    <property type="entry name" value="Elongation factor P"/>
    <property type="match status" value="1"/>
</dbReference>
<dbReference type="FunFam" id="2.40.50.140:FF:000004">
    <property type="entry name" value="Elongation factor P"/>
    <property type="match status" value="1"/>
</dbReference>
<dbReference type="FunFam" id="2.40.50.140:FF:000009">
    <property type="entry name" value="Elongation factor P"/>
    <property type="match status" value="1"/>
</dbReference>
<dbReference type="Gene3D" id="2.30.30.30">
    <property type="match status" value="1"/>
</dbReference>
<dbReference type="Gene3D" id="2.40.50.140">
    <property type="entry name" value="Nucleic acid-binding proteins"/>
    <property type="match status" value="2"/>
</dbReference>
<dbReference type="HAMAP" id="MF_00141">
    <property type="entry name" value="EF_P"/>
    <property type="match status" value="1"/>
</dbReference>
<dbReference type="InterPro" id="IPR015365">
    <property type="entry name" value="Elong-fact-P_C"/>
</dbReference>
<dbReference type="InterPro" id="IPR012340">
    <property type="entry name" value="NA-bd_OB-fold"/>
</dbReference>
<dbReference type="InterPro" id="IPR014722">
    <property type="entry name" value="Rib_uL2_dom2"/>
</dbReference>
<dbReference type="InterPro" id="IPR020599">
    <property type="entry name" value="Transl_elong_fac_P/YeiP"/>
</dbReference>
<dbReference type="InterPro" id="IPR013185">
    <property type="entry name" value="Transl_elong_KOW-like"/>
</dbReference>
<dbReference type="InterPro" id="IPR001059">
    <property type="entry name" value="Transl_elong_P/YeiP_cen"/>
</dbReference>
<dbReference type="InterPro" id="IPR013852">
    <property type="entry name" value="Transl_elong_P/YeiP_CS"/>
</dbReference>
<dbReference type="InterPro" id="IPR011768">
    <property type="entry name" value="Transl_elongation_fac_P"/>
</dbReference>
<dbReference type="InterPro" id="IPR008991">
    <property type="entry name" value="Translation_prot_SH3-like_sf"/>
</dbReference>
<dbReference type="NCBIfam" id="TIGR00038">
    <property type="entry name" value="efp"/>
    <property type="match status" value="1"/>
</dbReference>
<dbReference type="NCBIfam" id="NF001810">
    <property type="entry name" value="PRK00529.1"/>
    <property type="match status" value="1"/>
</dbReference>
<dbReference type="PANTHER" id="PTHR30053">
    <property type="entry name" value="ELONGATION FACTOR P"/>
    <property type="match status" value="1"/>
</dbReference>
<dbReference type="PANTHER" id="PTHR30053:SF12">
    <property type="entry name" value="ELONGATION FACTOR P (EF-P) FAMILY PROTEIN"/>
    <property type="match status" value="1"/>
</dbReference>
<dbReference type="Pfam" id="PF01132">
    <property type="entry name" value="EFP"/>
    <property type="match status" value="1"/>
</dbReference>
<dbReference type="Pfam" id="PF08207">
    <property type="entry name" value="EFP_N"/>
    <property type="match status" value="1"/>
</dbReference>
<dbReference type="Pfam" id="PF09285">
    <property type="entry name" value="Elong-fact-P_C"/>
    <property type="match status" value="1"/>
</dbReference>
<dbReference type="PIRSF" id="PIRSF005901">
    <property type="entry name" value="EF-P"/>
    <property type="match status" value="1"/>
</dbReference>
<dbReference type="SMART" id="SM01185">
    <property type="entry name" value="EFP"/>
    <property type="match status" value="1"/>
</dbReference>
<dbReference type="SMART" id="SM00841">
    <property type="entry name" value="Elong-fact-P_C"/>
    <property type="match status" value="1"/>
</dbReference>
<dbReference type="SUPFAM" id="SSF50249">
    <property type="entry name" value="Nucleic acid-binding proteins"/>
    <property type="match status" value="2"/>
</dbReference>
<dbReference type="SUPFAM" id="SSF50104">
    <property type="entry name" value="Translation proteins SH3-like domain"/>
    <property type="match status" value="1"/>
</dbReference>
<dbReference type="PROSITE" id="PS01275">
    <property type="entry name" value="EFP"/>
    <property type="match status" value="1"/>
</dbReference>
<keyword id="KW-0963">Cytoplasm</keyword>
<keyword id="KW-0251">Elongation factor</keyword>
<keyword id="KW-0648">Protein biosynthesis</keyword>
<keyword id="KW-1185">Reference proteome</keyword>
<protein>
    <recommendedName>
        <fullName evidence="1">Elongation factor P</fullName>
        <shortName evidence="1">EF-P</shortName>
    </recommendedName>
</protein>
<feature type="chain" id="PRO_1000076507" description="Elongation factor P">
    <location>
        <begin position="1"/>
        <end position="189"/>
    </location>
</feature>
<comment type="function">
    <text evidence="1">Involved in peptide bond synthesis. Stimulates efficient translation and peptide-bond synthesis on native or reconstituted 70S ribosomes in vitro. Probably functions indirectly by altering the affinity of the ribosome for aminoacyl-tRNA, thus increasing their reactivity as acceptors for peptidyl transferase.</text>
</comment>
<comment type="pathway">
    <text evidence="1">Protein biosynthesis; polypeptide chain elongation.</text>
</comment>
<comment type="subcellular location">
    <subcellularLocation>
        <location evidence="1">Cytoplasm</location>
    </subcellularLocation>
</comment>
<comment type="similarity">
    <text evidence="1">Belongs to the elongation factor P family.</text>
</comment>
<reference key="1">
    <citation type="journal article" date="2011" name="BMC Genomics">
        <title>Complete genome sequence of the filamentous anoxygenic phototrophic bacterium Chloroflexus aurantiacus.</title>
        <authorList>
            <person name="Tang K.H."/>
            <person name="Barry K."/>
            <person name="Chertkov O."/>
            <person name="Dalin E."/>
            <person name="Han C.S."/>
            <person name="Hauser L.J."/>
            <person name="Honchak B.M."/>
            <person name="Karbach L.E."/>
            <person name="Land M.L."/>
            <person name="Lapidus A."/>
            <person name="Larimer F.W."/>
            <person name="Mikhailova N."/>
            <person name="Pitluck S."/>
            <person name="Pierson B.K."/>
            <person name="Blankenship R.E."/>
        </authorList>
    </citation>
    <scope>NUCLEOTIDE SEQUENCE [LARGE SCALE GENOMIC DNA]</scope>
    <source>
        <strain>ATCC 29366 / DSM 635 / J-10-fl</strain>
    </source>
</reference>
<name>EFP_CHLAA</name>
<organism>
    <name type="scientific">Chloroflexus aurantiacus (strain ATCC 29366 / DSM 635 / J-10-fl)</name>
    <dbReference type="NCBI Taxonomy" id="324602"/>
    <lineage>
        <taxon>Bacteria</taxon>
        <taxon>Bacillati</taxon>
        <taxon>Chloroflexota</taxon>
        <taxon>Chloroflexia</taxon>
        <taxon>Chloroflexales</taxon>
        <taxon>Chloroflexineae</taxon>
        <taxon>Chloroflexaceae</taxon>
        <taxon>Chloroflexus</taxon>
    </lineage>
</organism>
<proteinExistence type="inferred from homology"/>